<gene>
    <name evidence="1" type="primary">rplC</name>
    <name type="ordered locus">Glov_1346</name>
</gene>
<name>RL3_TRIL1</name>
<reference key="1">
    <citation type="submission" date="2008-05" db="EMBL/GenBank/DDBJ databases">
        <title>Complete sequence of chromosome of Geobacter lovleyi SZ.</title>
        <authorList>
            <consortium name="US DOE Joint Genome Institute"/>
            <person name="Lucas S."/>
            <person name="Copeland A."/>
            <person name="Lapidus A."/>
            <person name="Glavina del Rio T."/>
            <person name="Dalin E."/>
            <person name="Tice H."/>
            <person name="Bruce D."/>
            <person name="Goodwin L."/>
            <person name="Pitluck S."/>
            <person name="Chertkov O."/>
            <person name="Meincke L."/>
            <person name="Brettin T."/>
            <person name="Detter J.C."/>
            <person name="Han C."/>
            <person name="Tapia R."/>
            <person name="Kuske C.R."/>
            <person name="Schmutz J."/>
            <person name="Larimer F."/>
            <person name="Land M."/>
            <person name="Hauser L."/>
            <person name="Kyrpides N."/>
            <person name="Mikhailova N."/>
            <person name="Sung Y."/>
            <person name="Fletcher K.E."/>
            <person name="Ritalahti K.M."/>
            <person name="Loeffler F.E."/>
            <person name="Richardson P."/>
        </authorList>
    </citation>
    <scope>NUCLEOTIDE SEQUENCE [LARGE SCALE GENOMIC DNA]</scope>
    <source>
        <strain>ATCC BAA-1151 / DSM 17278 / SZ</strain>
    </source>
</reference>
<organism>
    <name type="scientific">Trichlorobacter lovleyi (strain ATCC BAA-1151 / DSM 17278 / SZ)</name>
    <name type="common">Geobacter lovleyi</name>
    <dbReference type="NCBI Taxonomy" id="398767"/>
    <lineage>
        <taxon>Bacteria</taxon>
        <taxon>Pseudomonadati</taxon>
        <taxon>Thermodesulfobacteriota</taxon>
        <taxon>Desulfuromonadia</taxon>
        <taxon>Geobacterales</taxon>
        <taxon>Geobacteraceae</taxon>
        <taxon>Trichlorobacter</taxon>
    </lineage>
</organism>
<protein>
    <recommendedName>
        <fullName evidence="1">Large ribosomal subunit protein uL3</fullName>
    </recommendedName>
    <alternativeName>
        <fullName evidence="2">50S ribosomal protein L3</fullName>
    </alternativeName>
</protein>
<keyword id="KW-1185">Reference proteome</keyword>
<keyword id="KW-0687">Ribonucleoprotein</keyword>
<keyword id="KW-0689">Ribosomal protein</keyword>
<keyword id="KW-0694">RNA-binding</keyword>
<keyword id="KW-0699">rRNA-binding</keyword>
<accession>B3E7T5</accession>
<comment type="function">
    <text evidence="1">One of the primary rRNA binding proteins, it binds directly near the 3'-end of the 23S rRNA, where it nucleates assembly of the 50S subunit.</text>
</comment>
<comment type="subunit">
    <text evidence="1">Part of the 50S ribosomal subunit. Forms a cluster with proteins L14 and L19.</text>
</comment>
<comment type="similarity">
    <text evidence="1">Belongs to the universal ribosomal protein uL3 family.</text>
</comment>
<feature type="chain" id="PRO_1000141874" description="Large ribosomal subunit protein uL3">
    <location>
        <begin position="1"/>
        <end position="211"/>
    </location>
</feature>
<proteinExistence type="inferred from homology"/>
<evidence type="ECO:0000255" key="1">
    <source>
        <dbReference type="HAMAP-Rule" id="MF_01325"/>
    </source>
</evidence>
<evidence type="ECO:0000305" key="2"/>
<sequence length="211" mass="22729">MNKGIIGKKLGMTQIFLEDGTRVPVTVVQAGPCVVLQKKTAEVDGYSAVQVGFETVNAAKANSADRGHCVKAGKGVFRHLRELKLEQEAELNIGDELTVQQFEPGDLIDVTGTSIGKGFQGVIKRHNFKGGRASHGSRFHRAPGSIGCSATPSRVFKNKKMPGQMGNERVTVQRLQVVRVDADQNLILIKGAIPDSKNNVVVIKDSVKATK</sequence>
<dbReference type="EMBL" id="CP001089">
    <property type="protein sequence ID" value="ACD95067.1"/>
    <property type="molecule type" value="Genomic_DNA"/>
</dbReference>
<dbReference type="RefSeq" id="WP_012469412.1">
    <property type="nucleotide sequence ID" value="NC_010814.1"/>
</dbReference>
<dbReference type="SMR" id="B3E7T5"/>
<dbReference type="STRING" id="398767.Glov_1346"/>
<dbReference type="KEGG" id="glo:Glov_1346"/>
<dbReference type="eggNOG" id="COG0087">
    <property type="taxonomic scope" value="Bacteria"/>
</dbReference>
<dbReference type="HOGENOM" id="CLU_044142_4_1_7"/>
<dbReference type="OrthoDB" id="9806135at2"/>
<dbReference type="Proteomes" id="UP000002420">
    <property type="component" value="Chromosome"/>
</dbReference>
<dbReference type="GO" id="GO:0022625">
    <property type="term" value="C:cytosolic large ribosomal subunit"/>
    <property type="evidence" value="ECO:0007669"/>
    <property type="project" value="TreeGrafter"/>
</dbReference>
<dbReference type="GO" id="GO:0019843">
    <property type="term" value="F:rRNA binding"/>
    <property type="evidence" value="ECO:0007669"/>
    <property type="project" value="UniProtKB-UniRule"/>
</dbReference>
<dbReference type="GO" id="GO:0003735">
    <property type="term" value="F:structural constituent of ribosome"/>
    <property type="evidence" value="ECO:0007669"/>
    <property type="project" value="InterPro"/>
</dbReference>
<dbReference type="GO" id="GO:0006412">
    <property type="term" value="P:translation"/>
    <property type="evidence" value="ECO:0007669"/>
    <property type="project" value="UniProtKB-UniRule"/>
</dbReference>
<dbReference type="FunFam" id="2.40.30.10:FF:000004">
    <property type="entry name" value="50S ribosomal protein L3"/>
    <property type="match status" value="1"/>
</dbReference>
<dbReference type="FunFam" id="3.30.160.810:FF:000001">
    <property type="entry name" value="50S ribosomal protein L3"/>
    <property type="match status" value="1"/>
</dbReference>
<dbReference type="Gene3D" id="3.30.160.810">
    <property type="match status" value="1"/>
</dbReference>
<dbReference type="Gene3D" id="2.40.30.10">
    <property type="entry name" value="Translation factors"/>
    <property type="match status" value="1"/>
</dbReference>
<dbReference type="HAMAP" id="MF_01325_B">
    <property type="entry name" value="Ribosomal_uL3_B"/>
    <property type="match status" value="1"/>
</dbReference>
<dbReference type="InterPro" id="IPR000597">
    <property type="entry name" value="Ribosomal_uL3"/>
</dbReference>
<dbReference type="InterPro" id="IPR019927">
    <property type="entry name" value="Ribosomal_uL3_bac/org-type"/>
</dbReference>
<dbReference type="InterPro" id="IPR019926">
    <property type="entry name" value="Ribosomal_uL3_CS"/>
</dbReference>
<dbReference type="InterPro" id="IPR009000">
    <property type="entry name" value="Transl_B-barrel_sf"/>
</dbReference>
<dbReference type="NCBIfam" id="TIGR03625">
    <property type="entry name" value="L3_bact"/>
    <property type="match status" value="1"/>
</dbReference>
<dbReference type="PANTHER" id="PTHR11229">
    <property type="entry name" value="50S RIBOSOMAL PROTEIN L3"/>
    <property type="match status" value="1"/>
</dbReference>
<dbReference type="PANTHER" id="PTHR11229:SF16">
    <property type="entry name" value="LARGE RIBOSOMAL SUBUNIT PROTEIN UL3C"/>
    <property type="match status" value="1"/>
</dbReference>
<dbReference type="Pfam" id="PF00297">
    <property type="entry name" value="Ribosomal_L3"/>
    <property type="match status" value="1"/>
</dbReference>
<dbReference type="SUPFAM" id="SSF50447">
    <property type="entry name" value="Translation proteins"/>
    <property type="match status" value="1"/>
</dbReference>
<dbReference type="PROSITE" id="PS00474">
    <property type="entry name" value="RIBOSOMAL_L3"/>
    <property type="match status" value="1"/>
</dbReference>